<evidence type="ECO:0000255" key="1"/>
<evidence type="ECO:0000269" key="2">
    <source>
    </source>
</evidence>
<evidence type="ECO:0000269" key="3">
    <source>
    </source>
</evidence>
<evidence type="ECO:0000269" key="4">
    <source>
    </source>
</evidence>
<evidence type="ECO:0000303" key="5">
    <source>
    </source>
</evidence>
<evidence type="ECO:0000303" key="6">
    <source>
    </source>
</evidence>
<evidence type="ECO:0000305" key="7"/>
<evidence type="ECO:0000305" key="8">
    <source>
    </source>
</evidence>
<evidence type="ECO:0000305" key="9">
    <source>
    </source>
</evidence>
<evidence type="ECO:0000305" key="10">
    <source>
    </source>
</evidence>
<sequence>MDINEKAPGPSGRRPARRRDGGGQVLVLYLAIAVVVAVLAWPWLAPRLGSFPGSLLSWIGDGGSVGAPRPATLDERMDMVEAALAPLAMRIAEADRRLAMLEANPRTAGEDPRKEAAGVSADPEQMSWMAAEIATLKGDLEIVRKLAADEGGATKLSGAVEKAEAAFRRIAERRDRAPLFLAALGQLREAVDRGSPYPAQMKAAMILAEKGTADKLAPLVMGSATGIVTRVGLAESFRVTAAAARKLDVPADSGWVPPNIRRWLGGAVLIRRTEGGEEGLDGILNSTSRLLAGGDLAGAAALLRRAEGPSLAAIQPWLEAAELRLSADAALSELSAMAMTVASSRDE</sequence>
<gene>
    <name evidence="6" type="primary">mms36</name>
    <name type="ordered locus">MGMSRv2__2398</name>
    <name type="ORF">mgI458</name>
    <name type="ORF">MGR_4071</name>
    <name evidence="5" type="ORF">ORF2</name>
</gene>
<feature type="chain" id="PRO_0000447816" description="Probable magnetosome protein Mms36">
    <location>
        <begin position="1"/>
        <end position="347"/>
    </location>
</feature>
<feature type="transmembrane region" description="Helical" evidence="1">
    <location>
        <begin position="25"/>
        <end position="45"/>
    </location>
</feature>
<proteinExistence type="inferred from homology"/>
<comment type="function">
    <text evidence="4">The 4 genes of this operon collectively influence magnetosome size and number.</text>
</comment>
<comment type="subcellular location">
    <subcellularLocation>
        <location evidence="7">Magnetosome membrane</location>
        <topology evidence="1">Single-pass membrane protein</topology>
    </subcellularLocation>
</comment>
<comment type="induction">
    <text evidence="9 10">Part of the probable mms6 operon.</text>
</comment>
<comment type="disruption phenotype">
    <text evidence="2 3 4">Normal magnetic response, fewer, larger magnetosomes; cells accumulate 20% more iron (PubMed:24816605). Deletion of the 4 gene operon (mms6, mmsF, mms36 and mms48) gives an intermediate magnetic response with fewer, smaller magnetosomes in irregular pseudo-chains (PubMed:22043287, PubMed:24816605). Deletion of approximately 80 kb of DNA, including this gene, leads to cells that are non-magnetic, lack internal membrane systems, grow poorly, have reduced mobility and take-up and accumulate iron poorly (PubMed:13129949).</text>
</comment>
<comment type="miscellaneous">
    <text evidence="8">This bacteria makes up to 60 cubo-octahedral magnetosomes of about 45 nm in diameter which contain membrane-bound crystals of magnetite (Fe(3)O(4)).</text>
</comment>
<organism>
    <name type="scientific">Magnetospirillum gryphiswaldense (strain DSM 6361 / JCM 21280 / NBRC 15271 / MSR-1)</name>
    <dbReference type="NCBI Taxonomy" id="431944"/>
    <lineage>
        <taxon>Bacteria</taxon>
        <taxon>Pseudomonadati</taxon>
        <taxon>Pseudomonadota</taxon>
        <taxon>Alphaproteobacteria</taxon>
        <taxon>Rhodospirillales</taxon>
        <taxon>Rhodospirillaceae</taxon>
        <taxon>Magnetospirillum</taxon>
    </lineage>
</organism>
<dbReference type="EMBL" id="BX571797">
    <property type="protein sequence ID" value="CAE12015.1"/>
    <property type="molecule type" value="Genomic_DNA"/>
</dbReference>
<dbReference type="EMBL" id="AM085146">
    <property type="protein sequence ID" value="CAJ30094.1"/>
    <property type="molecule type" value="Genomic_DNA"/>
</dbReference>
<dbReference type="EMBL" id="CU459003">
    <property type="protein sequence ID" value="CAM78003.1"/>
    <property type="molecule type" value="Genomic_DNA"/>
</dbReference>
<dbReference type="EMBL" id="HG794546">
    <property type="protein sequence ID" value="CDK99613.1"/>
    <property type="molecule type" value="Genomic_DNA"/>
</dbReference>
<dbReference type="SMR" id="Q6NE78"/>
<dbReference type="STRING" id="1430440.MGMSRv2__2398"/>
<dbReference type="KEGG" id="mgy:MGMSRv2__2398"/>
<dbReference type="HOGENOM" id="CLU_798778_0_0_5"/>
<dbReference type="OrthoDB" id="7332801at2"/>
<dbReference type="Proteomes" id="UP000018922">
    <property type="component" value="Chromosome I"/>
</dbReference>
<dbReference type="GO" id="GO:0110146">
    <property type="term" value="C:magnetosome membrane"/>
    <property type="evidence" value="ECO:0007669"/>
    <property type="project" value="UniProtKB-SubCell"/>
</dbReference>
<keyword id="KW-0091">Biomineralization</keyword>
<keyword id="KW-1281">Magnetosome</keyword>
<keyword id="KW-0472">Membrane</keyword>
<keyword id="KW-1185">Reference proteome</keyword>
<keyword id="KW-0812">Transmembrane</keyword>
<keyword id="KW-1133">Transmembrane helix</keyword>
<protein>
    <recommendedName>
        <fullName evidence="7">Probable magnetosome protein Mms36</fullName>
    </recommendedName>
</protein>
<reference key="1">
    <citation type="journal article" date="2003" name="J. Bacteriol.">
        <title>Characterization of a spontaneous nonmagnetic mutant of Magnetospirillum gryphiswaldense reveals a large deletion comprising a putative magnetosome island.</title>
        <authorList>
            <person name="Schuebbe S."/>
            <person name="Kube M."/>
            <person name="Scheffel A."/>
            <person name="Wawer C."/>
            <person name="Heyen U."/>
            <person name="Meyerdierks A."/>
            <person name="Madkour M.H."/>
            <person name="Mayer F."/>
            <person name="Reinhardt R."/>
            <person name="Schueler D."/>
        </authorList>
    </citation>
    <scope>NUCLEOTIDE SEQUENCE [GENOMIC DNA]</scope>
    <scope>DISRUPTION PHENOTYPE</scope>
    <source>
        <strain>DSM 6361 / JCM 21280 / NBRC 15271 / MSR-1</strain>
    </source>
</reference>
<reference key="2">
    <citation type="journal article" date="2005" name="J. Bacteriol.">
        <title>A hypervariable 130-kilobase genomic region of Magnetospirillum gryphiswaldense comprises a magnetosome island which undergoes frequent rearrangements during stationary growth.</title>
        <authorList>
            <person name="Ullrich S."/>
            <person name="Kube M."/>
            <person name="Schuebbe S."/>
            <person name="Reinhardt R."/>
            <person name="Schueler D."/>
        </authorList>
    </citation>
    <scope>NUCLEOTIDE SEQUENCE [GENOMIC DNA]</scope>
    <source>
        <strain>DSM 6361 / JCM 21280 / NBRC 15271 / MSR-1</strain>
    </source>
</reference>
<reference key="3">
    <citation type="journal article" date="2007" name="J. Bacteriol.">
        <title>Comparative genome analysis of four magnetotactic bacteria reveals a complex set of group-specific genes implicated in magnetosome biomineralization and function.</title>
        <authorList>
            <person name="Richter M."/>
            <person name="Kube M."/>
            <person name="Bazylinski D.A."/>
            <person name="Lombardot T."/>
            <person name="Gloeckner F.O."/>
            <person name="Reinhardt R."/>
            <person name="Schueler D."/>
        </authorList>
    </citation>
    <scope>NUCLEOTIDE SEQUENCE [LARGE SCALE GENOMIC DNA]</scope>
    <source>
        <strain>DSM 6361 / JCM 21280 / NBRC 15271 / MSR-1</strain>
    </source>
</reference>
<reference key="4">
    <citation type="journal article" date="2014" name="Genome Announc.">
        <title>Complete genome sequence of Magnetospirillum gryphiswaldense MSR-1.</title>
        <authorList>
            <person name="Wang X."/>
            <person name="Wang Q."/>
            <person name="Zhang W."/>
            <person name="Wang Y."/>
            <person name="Li L."/>
            <person name="Wen T."/>
            <person name="Zhang T."/>
            <person name="Zhang Y."/>
            <person name="Xu J."/>
            <person name="Hu J."/>
            <person name="Li S."/>
            <person name="Liu L."/>
            <person name="Liu J."/>
            <person name="Jiang W."/>
            <person name="Tian J."/>
            <person name="Li Y."/>
            <person name="Schuler D."/>
            <person name="Wang L."/>
            <person name="Li J."/>
        </authorList>
    </citation>
    <scope>NUCLEOTIDE SEQUENCE [LARGE SCALE GENOMIC DNA]</scope>
    <source>
        <strain>DSM 6361 / JCM 21280 / NBRC 15271 / MSR-1</strain>
    </source>
</reference>
<reference key="5">
    <citation type="journal article" date="2011" name="PLoS ONE">
        <title>Functional analysis of the magnetosome island in Magnetospirillum gryphiswaldense: the mamAB operon is sufficient for magnetite biomineralization.</title>
        <authorList>
            <person name="Lohsse A."/>
            <person name="Ullrich S."/>
            <person name="Katzmann E."/>
            <person name="Borg S."/>
            <person name="Wanner G."/>
            <person name="Richter M."/>
            <person name="Voigt B."/>
            <person name="Schweder T."/>
            <person name="Schueler D."/>
        </authorList>
    </citation>
    <scope>PROBABLE OPERON</scope>
    <scope>DISRUPTION PHENOTYPE</scope>
    <source>
        <strain>DSM 6361 / JCM 21280 / NBRC 15271 / MSR-1</strain>
    </source>
</reference>
<reference key="6">
    <citation type="journal article" date="2014" name="J. Bacteriol.">
        <title>Genetic dissection of the mamAB and mms6 operons reveals a gene set essential for magnetosome biogenesis in Magnetospirillum gryphiswaldense.</title>
        <authorList>
            <person name="Lohsse A."/>
            <person name="Borg S."/>
            <person name="Raschdorf O."/>
            <person name="Kolinko I."/>
            <person name="Tompa E."/>
            <person name="Posfai M."/>
            <person name="Faivre D."/>
            <person name="Baumgartner J."/>
            <person name="Schueler D."/>
        </authorList>
    </citation>
    <scope>FUNCTION</scope>
    <scope>PROBABLE OPERON</scope>
    <scope>DISRUPTION PHENOTYPE</scope>
    <source>
        <strain>DSM 6361 / JCM 21280 / NBRC 15271 / MSR-1</strain>
    </source>
</reference>
<accession>Q6NE78</accession>
<accession>V6F540</accession>
<name>MMS36_MAGGM</name>